<sequence length="460" mass="52083">MLKIYNTLTRQKEEFKPITAGKVGMYVCGVTIYDLCHIGHGRTFVSFDVVSRYLRYLGYDLTFVRNITDIDDKIIKRAAENGETCDSLTERLIGEMHADFDALNMKRPDVEPRATQYIQEIIELVERLIERGFAYVADNGDVMFEVNKFDEYGKLSKQDLDQLQAGARVDVETAKRCPLDFVLWKMSKPGEPTWESPWGPGRPGWHIECSAMNSSILGNHFDIHGGGSDLQFPHHENEIAQSCCAHDTQYVNTWMHSGMVMVDKEKMSKSLGNFFTIRDVLGHYDAETVRYFLMSGHYRSQLNYSEENLNQARASLERLYTSLRGLDFSAAPAGGEEYVSRFTAAMNDDFNTPEAYSVLFDMAREINRLKTEDLANASALGALMRELADVIGILHQDPDAFLKGDAGNDDEVAEIEALIKLRNDSRAAKDWANADMARDKLNEMGIVLEDGPEGTTWRRK</sequence>
<proteinExistence type="inferred from homology"/>
<dbReference type="EC" id="6.1.1.16" evidence="1"/>
<dbReference type="EMBL" id="AE016795">
    <property type="protein sequence ID" value="AAO11241.2"/>
    <property type="molecule type" value="Genomic_DNA"/>
</dbReference>
<dbReference type="RefSeq" id="WP_011080728.1">
    <property type="nucleotide sequence ID" value="NC_004459.3"/>
</dbReference>
<dbReference type="SMR" id="Q8D8R1"/>
<dbReference type="KEGG" id="vvu:VV1_2908"/>
<dbReference type="HOGENOM" id="CLU_013528_0_1_6"/>
<dbReference type="Proteomes" id="UP000002275">
    <property type="component" value="Chromosome 1"/>
</dbReference>
<dbReference type="GO" id="GO:0005829">
    <property type="term" value="C:cytosol"/>
    <property type="evidence" value="ECO:0007669"/>
    <property type="project" value="TreeGrafter"/>
</dbReference>
<dbReference type="GO" id="GO:0005524">
    <property type="term" value="F:ATP binding"/>
    <property type="evidence" value="ECO:0007669"/>
    <property type="project" value="UniProtKB-UniRule"/>
</dbReference>
<dbReference type="GO" id="GO:0004817">
    <property type="term" value="F:cysteine-tRNA ligase activity"/>
    <property type="evidence" value="ECO:0007669"/>
    <property type="project" value="UniProtKB-UniRule"/>
</dbReference>
<dbReference type="GO" id="GO:0008270">
    <property type="term" value="F:zinc ion binding"/>
    <property type="evidence" value="ECO:0007669"/>
    <property type="project" value="UniProtKB-UniRule"/>
</dbReference>
<dbReference type="GO" id="GO:0006423">
    <property type="term" value="P:cysteinyl-tRNA aminoacylation"/>
    <property type="evidence" value="ECO:0007669"/>
    <property type="project" value="UniProtKB-UniRule"/>
</dbReference>
<dbReference type="CDD" id="cd07963">
    <property type="entry name" value="Anticodon_Ia_Cys"/>
    <property type="match status" value="1"/>
</dbReference>
<dbReference type="CDD" id="cd00672">
    <property type="entry name" value="CysRS_core"/>
    <property type="match status" value="1"/>
</dbReference>
<dbReference type="FunFam" id="1.20.120.1910:FF:000001">
    <property type="entry name" value="Cysteine--tRNA ligase"/>
    <property type="match status" value="1"/>
</dbReference>
<dbReference type="FunFam" id="3.40.50.620:FF:000009">
    <property type="entry name" value="Cysteine--tRNA ligase"/>
    <property type="match status" value="1"/>
</dbReference>
<dbReference type="Gene3D" id="1.20.120.1910">
    <property type="entry name" value="Cysteine-tRNA ligase, C-terminal anti-codon recognition domain"/>
    <property type="match status" value="1"/>
</dbReference>
<dbReference type="Gene3D" id="3.40.50.620">
    <property type="entry name" value="HUPs"/>
    <property type="match status" value="1"/>
</dbReference>
<dbReference type="HAMAP" id="MF_00041">
    <property type="entry name" value="Cys_tRNA_synth"/>
    <property type="match status" value="1"/>
</dbReference>
<dbReference type="InterPro" id="IPR015803">
    <property type="entry name" value="Cys-tRNA-ligase"/>
</dbReference>
<dbReference type="InterPro" id="IPR015273">
    <property type="entry name" value="Cys-tRNA-synt_Ia_DALR"/>
</dbReference>
<dbReference type="InterPro" id="IPR024909">
    <property type="entry name" value="Cys-tRNA/MSH_ligase"/>
</dbReference>
<dbReference type="InterPro" id="IPR056411">
    <property type="entry name" value="CysS_C"/>
</dbReference>
<dbReference type="InterPro" id="IPR014729">
    <property type="entry name" value="Rossmann-like_a/b/a_fold"/>
</dbReference>
<dbReference type="InterPro" id="IPR032678">
    <property type="entry name" value="tRNA-synt_1_cat_dom"/>
</dbReference>
<dbReference type="InterPro" id="IPR009080">
    <property type="entry name" value="tRNAsynth_Ia_anticodon-bd"/>
</dbReference>
<dbReference type="NCBIfam" id="TIGR00435">
    <property type="entry name" value="cysS"/>
    <property type="match status" value="1"/>
</dbReference>
<dbReference type="PANTHER" id="PTHR10890:SF3">
    <property type="entry name" value="CYSTEINE--TRNA LIGASE, CYTOPLASMIC"/>
    <property type="match status" value="1"/>
</dbReference>
<dbReference type="PANTHER" id="PTHR10890">
    <property type="entry name" value="CYSTEINYL-TRNA SYNTHETASE"/>
    <property type="match status" value="1"/>
</dbReference>
<dbReference type="Pfam" id="PF23493">
    <property type="entry name" value="CysS_C"/>
    <property type="match status" value="1"/>
</dbReference>
<dbReference type="Pfam" id="PF09190">
    <property type="entry name" value="DALR_2"/>
    <property type="match status" value="1"/>
</dbReference>
<dbReference type="Pfam" id="PF01406">
    <property type="entry name" value="tRNA-synt_1e"/>
    <property type="match status" value="1"/>
</dbReference>
<dbReference type="PRINTS" id="PR00983">
    <property type="entry name" value="TRNASYNTHCYS"/>
</dbReference>
<dbReference type="SMART" id="SM00840">
    <property type="entry name" value="DALR_2"/>
    <property type="match status" value="1"/>
</dbReference>
<dbReference type="SUPFAM" id="SSF47323">
    <property type="entry name" value="Anticodon-binding domain of a subclass of class I aminoacyl-tRNA synthetases"/>
    <property type="match status" value="1"/>
</dbReference>
<dbReference type="SUPFAM" id="SSF52374">
    <property type="entry name" value="Nucleotidylyl transferase"/>
    <property type="match status" value="1"/>
</dbReference>
<comment type="catalytic activity">
    <reaction evidence="1">
        <text>tRNA(Cys) + L-cysteine + ATP = L-cysteinyl-tRNA(Cys) + AMP + diphosphate</text>
        <dbReference type="Rhea" id="RHEA:17773"/>
        <dbReference type="Rhea" id="RHEA-COMP:9661"/>
        <dbReference type="Rhea" id="RHEA-COMP:9679"/>
        <dbReference type="ChEBI" id="CHEBI:30616"/>
        <dbReference type="ChEBI" id="CHEBI:33019"/>
        <dbReference type="ChEBI" id="CHEBI:35235"/>
        <dbReference type="ChEBI" id="CHEBI:78442"/>
        <dbReference type="ChEBI" id="CHEBI:78517"/>
        <dbReference type="ChEBI" id="CHEBI:456215"/>
        <dbReference type="EC" id="6.1.1.16"/>
    </reaction>
</comment>
<comment type="cofactor">
    <cofactor evidence="1">
        <name>Zn(2+)</name>
        <dbReference type="ChEBI" id="CHEBI:29105"/>
    </cofactor>
    <text evidence="1">Binds 1 zinc ion per subunit.</text>
</comment>
<comment type="subunit">
    <text evidence="1">Monomer.</text>
</comment>
<comment type="subcellular location">
    <subcellularLocation>
        <location evidence="1">Cytoplasm</location>
    </subcellularLocation>
</comment>
<comment type="similarity">
    <text evidence="1">Belongs to the class-I aminoacyl-tRNA synthetase family.</text>
</comment>
<organism>
    <name type="scientific">Vibrio vulnificus (strain CMCP6)</name>
    <dbReference type="NCBI Taxonomy" id="216895"/>
    <lineage>
        <taxon>Bacteria</taxon>
        <taxon>Pseudomonadati</taxon>
        <taxon>Pseudomonadota</taxon>
        <taxon>Gammaproteobacteria</taxon>
        <taxon>Vibrionales</taxon>
        <taxon>Vibrionaceae</taxon>
        <taxon>Vibrio</taxon>
    </lineage>
</organism>
<protein>
    <recommendedName>
        <fullName evidence="1">Cysteine--tRNA ligase</fullName>
        <ecNumber evidence="1">6.1.1.16</ecNumber>
    </recommendedName>
    <alternativeName>
        <fullName evidence="1">Cysteinyl-tRNA synthetase</fullName>
        <shortName evidence="1">CysRS</shortName>
    </alternativeName>
</protein>
<reference key="1">
    <citation type="submission" date="2002-12" db="EMBL/GenBank/DDBJ databases">
        <title>Complete genome sequence of Vibrio vulnificus CMCP6.</title>
        <authorList>
            <person name="Rhee J.H."/>
            <person name="Kim S.Y."/>
            <person name="Chung S.S."/>
            <person name="Kim J.J."/>
            <person name="Moon Y.H."/>
            <person name="Jeong H."/>
            <person name="Choy H.E."/>
        </authorList>
    </citation>
    <scope>NUCLEOTIDE SEQUENCE [LARGE SCALE GENOMIC DNA]</scope>
    <source>
        <strain>CMCP6</strain>
    </source>
</reference>
<keyword id="KW-0030">Aminoacyl-tRNA synthetase</keyword>
<keyword id="KW-0067">ATP-binding</keyword>
<keyword id="KW-0963">Cytoplasm</keyword>
<keyword id="KW-0436">Ligase</keyword>
<keyword id="KW-0479">Metal-binding</keyword>
<keyword id="KW-0547">Nucleotide-binding</keyword>
<keyword id="KW-0648">Protein biosynthesis</keyword>
<keyword id="KW-0862">Zinc</keyword>
<feature type="chain" id="PRO_0000159520" description="Cysteine--tRNA ligase">
    <location>
        <begin position="1"/>
        <end position="460"/>
    </location>
</feature>
<feature type="short sequence motif" description="'HIGH' region">
    <location>
        <begin position="30"/>
        <end position="40"/>
    </location>
</feature>
<feature type="short sequence motif" description="'KMSKS' region">
    <location>
        <begin position="266"/>
        <end position="270"/>
    </location>
</feature>
<feature type="binding site" evidence="1">
    <location>
        <position position="28"/>
    </location>
    <ligand>
        <name>Zn(2+)</name>
        <dbReference type="ChEBI" id="CHEBI:29105"/>
    </ligand>
</feature>
<feature type="binding site" evidence="1">
    <location>
        <position position="209"/>
    </location>
    <ligand>
        <name>Zn(2+)</name>
        <dbReference type="ChEBI" id="CHEBI:29105"/>
    </ligand>
</feature>
<feature type="binding site" evidence="1">
    <location>
        <position position="234"/>
    </location>
    <ligand>
        <name>Zn(2+)</name>
        <dbReference type="ChEBI" id="CHEBI:29105"/>
    </ligand>
</feature>
<feature type="binding site" evidence="1">
    <location>
        <position position="238"/>
    </location>
    <ligand>
        <name>Zn(2+)</name>
        <dbReference type="ChEBI" id="CHEBI:29105"/>
    </ligand>
</feature>
<feature type="binding site" evidence="1">
    <location>
        <position position="269"/>
    </location>
    <ligand>
        <name>ATP</name>
        <dbReference type="ChEBI" id="CHEBI:30616"/>
    </ligand>
</feature>
<accession>Q8D8R1</accession>
<gene>
    <name evidence="1" type="primary">cysS</name>
    <name type="ordered locus">VV1_2908</name>
</gene>
<evidence type="ECO:0000255" key="1">
    <source>
        <dbReference type="HAMAP-Rule" id="MF_00041"/>
    </source>
</evidence>
<name>SYC_VIBVU</name>